<comment type="function">
    <text evidence="1">Vacuolar effluxer which mediate the efflux of amino acids resulting from autophagic degradation. The release of autophagic amino acids allows the maintenance of protein synthesis and viability during nitrogen starvation (By similarity).</text>
</comment>
<comment type="subcellular location">
    <subcellularLocation>
        <location evidence="1">Vacuole membrane</location>
        <topology evidence="1">Multi-pass membrane protein</topology>
    </subcellularLocation>
    <text evidence="1">Vacuole and punctate structures.</text>
</comment>
<comment type="similarity">
    <text evidence="4">Belongs to the ATG22 family.</text>
</comment>
<reference key="1">
    <citation type="journal article" date="2011" name="PLoS Genet.">
        <title>Genomic analysis of the necrotrophic fungal pathogens Sclerotinia sclerotiorum and Botrytis cinerea.</title>
        <authorList>
            <person name="Amselem J."/>
            <person name="Cuomo C.A."/>
            <person name="van Kan J.A.L."/>
            <person name="Viaud M."/>
            <person name="Benito E.P."/>
            <person name="Couloux A."/>
            <person name="Coutinho P.M."/>
            <person name="de Vries R.P."/>
            <person name="Dyer P.S."/>
            <person name="Fillinger S."/>
            <person name="Fournier E."/>
            <person name="Gout L."/>
            <person name="Hahn M."/>
            <person name="Kohn L."/>
            <person name="Lapalu N."/>
            <person name="Plummer K.M."/>
            <person name="Pradier J.-M."/>
            <person name="Quevillon E."/>
            <person name="Sharon A."/>
            <person name="Simon A."/>
            <person name="ten Have A."/>
            <person name="Tudzynski B."/>
            <person name="Tudzynski P."/>
            <person name="Wincker P."/>
            <person name="Andrew M."/>
            <person name="Anthouard V."/>
            <person name="Beever R.E."/>
            <person name="Beffa R."/>
            <person name="Benoit I."/>
            <person name="Bouzid O."/>
            <person name="Brault B."/>
            <person name="Chen Z."/>
            <person name="Choquer M."/>
            <person name="Collemare J."/>
            <person name="Cotton P."/>
            <person name="Danchin E.G."/>
            <person name="Da Silva C."/>
            <person name="Gautier A."/>
            <person name="Giraud C."/>
            <person name="Giraud T."/>
            <person name="Gonzalez C."/>
            <person name="Grossetete S."/>
            <person name="Gueldener U."/>
            <person name="Henrissat B."/>
            <person name="Howlett B.J."/>
            <person name="Kodira C."/>
            <person name="Kretschmer M."/>
            <person name="Lappartient A."/>
            <person name="Leroch M."/>
            <person name="Levis C."/>
            <person name="Mauceli E."/>
            <person name="Neuveglise C."/>
            <person name="Oeser B."/>
            <person name="Pearson M."/>
            <person name="Poulain J."/>
            <person name="Poussereau N."/>
            <person name="Quesneville H."/>
            <person name="Rascle C."/>
            <person name="Schumacher J."/>
            <person name="Segurens B."/>
            <person name="Sexton A."/>
            <person name="Silva E."/>
            <person name="Sirven C."/>
            <person name="Soanes D.M."/>
            <person name="Talbot N.J."/>
            <person name="Templeton M."/>
            <person name="Yandava C."/>
            <person name="Yarden O."/>
            <person name="Zeng Q."/>
            <person name="Rollins J.A."/>
            <person name="Lebrun M.-H."/>
            <person name="Dickman M."/>
        </authorList>
    </citation>
    <scope>NUCLEOTIDE SEQUENCE [LARGE SCALE GENOMIC DNA]</scope>
    <source>
        <strain>B05.10</strain>
    </source>
</reference>
<reference key="2">
    <citation type="journal article" date="2012" name="Eukaryot. Cell">
        <title>Genome update of Botrytis cinerea strains B05.10 and T4.</title>
        <authorList>
            <person name="Staats M."/>
            <person name="van Kan J.A.L."/>
        </authorList>
    </citation>
    <scope>NUCLEOTIDE SEQUENCE [LARGE SCALE GENOMIC DNA]</scope>
    <scope>GENOME REANNOTATION</scope>
    <source>
        <strain>B05.10</strain>
    </source>
</reference>
<reference key="3">
    <citation type="journal article" date="2017" name="Mol. Plant Pathol.">
        <title>A gapless genome sequence of the fungus Botrytis cinerea.</title>
        <authorList>
            <person name="van Kan J.A.L."/>
            <person name="Stassen J.H.M."/>
            <person name="Mosbach A."/>
            <person name="van der Lee T.A.J."/>
            <person name="Faino L."/>
            <person name="Farmer A.D."/>
            <person name="Papasotiriou D.G."/>
            <person name="Zhou S."/>
            <person name="Seidl M.F."/>
            <person name="Cottam E."/>
            <person name="Edel D."/>
            <person name="Hahn M."/>
            <person name="Schwartz D.C."/>
            <person name="Dietrich R.A."/>
            <person name="Widdison S."/>
            <person name="Scalliet G."/>
        </authorList>
    </citation>
    <scope>NUCLEOTIDE SEQUENCE [LARGE SCALE GENOMIC DNA]</scope>
    <scope>GENOME REANNOTATION</scope>
    <source>
        <strain>B05.10</strain>
    </source>
</reference>
<gene>
    <name type="primary">ATG22</name>
    <name type="ORF">BC1G_07239</name>
    <name type="ORF">BCIN_07g04640</name>
</gene>
<accession>A6S3R7</accession>
<accession>A0A384JMX8</accession>
<evidence type="ECO:0000250" key="1"/>
<evidence type="ECO:0000255" key="2"/>
<evidence type="ECO:0000256" key="3">
    <source>
        <dbReference type="SAM" id="MobiDB-lite"/>
    </source>
</evidence>
<evidence type="ECO:0000305" key="4"/>
<organism>
    <name type="scientific">Botryotinia fuckeliana (strain B05.10)</name>
    <name type="common">Noble rot fungus</name>
    <name type="synonym">Botrytis cinerea</name>
    <dbReference type="NCBI Taxonomy" id="332648"/>
    <lineage>
        <taxon>Eukaryota</taxon>
        <taxon>Fungi</taxon>
        <taxon>Dikarya</taxon>
        <taxon>Ascomycota</taxon>
        <taxon>Pezizomycotina</taxon>
        <taxon>Leotiomycetes</taxon>
        <taxon>Helotiales</taxon>
        <taxon>Sclerotiniaceae</taxon>
        <taxon>Botrytis</taxon>
    </lineage>
</organism>
<proteinExistence type="inferred from homology"/>
<name>AT222_BOTFB</name>
<sequence length="672" mass="73600">MVPRISEPQLRPEPHRAPSNSTKLSYTSYSSSFEADDERSSSADHDSMGPDIGSAHRDVPAQYAGEDTRLTSRKELSGWYAYGFAAEVFVICGIGSFIPITLEQLARENGVLLSDPTQPCGSSSTHLPPGLNPGNAKDSQCVIYIGGLQINTASFAMYSFSLSVLFQAILVVSISCAADHGNYRKRLLLFFAFAGSITTMLFLTVVPKVYLLGALWAIISNTCFGASFVLLNSFLPLLVRHHPKTQYGTPDFSPELHPSFVDEYPPEHSLGESEAEVYDERSALLSHNRTLSEAPDVTEPLPLSADSTSIELQLSTQISSTGIGIGYSAGLFLQCVSIIIIWLLKGTTFSLRLVLFFIGLWWFLFTIPAALWLRPRPGPPLPSTGNRNSKGSRSWLAYTIYAWSSLFRTVKLARRLKDITLFLAAWFLLSDAIATVSGTAVLYAKTQLRMAPEALGLINVIATTAGVLGAFSWAAISRALNLKPHQTILACICIFESIPLYGLLGFLPIVKRWNVIGLQQPWEMYPLGFIYGFVLGGLSSYCRSLFGELIPPGSEAAFYALYAITDKGSSVFGPAIVGAIVDGTGEIRPAFWFLAVLVGLPAPLIYFVNVERGKEEGARLAEIIEGFRIKDAEIASGEHSSTESISEDERGRDHREISPHDEEREGRRRNDI</sequence>
<feature type="chain" id="PRO_0000318023" description="Autophagy-related protein 22">
    <location>
        <begin position="1"/>
        <end position="672"/>
    </location>
</feature>
<feature type="transmembrane region" description="Helical" evidence="2">
    <location>
        <begin position="82"/>
        <end position="102"/>
    </location>
</feature>
<feature type="transmembrane region" description="Helical" evidence="2">
    <location>
        <begin position="154"/>
        <end position="174"/>
    </location>
</feature>
<feature type="transmembrane region" description="Helical" evidence="2">
    <location>
        <begin position="187"/>
        <end position="207"/>
    </location>
</feature>
<feature type="transmembrane region" description="Helical" evidence="2">
    <location>
        <begin position="211"/>
        <end position="231"/>
    </location>
</feature>
<feature type="transmembrane region" description="Helical" evidence="2">
    <location>
        <begin position="323"/>
        <end position="343"/>
    </location>
</feature>
<feature type="transmembrane region" description="Helical" evidence="2">
    <location>
        <begin position="353"/>
        <end position="373"/>
    </location>
</feature>
<feature type="transmembrane region" description="Helical" evidence="2">
    <location>
        <begin position="421"/>
        <end position="441"/>
    </location>
</feature>
<feature type="transmembrane region" description="Helical" evidence="2">
    <location>
        <begin position="456"/>
        <end position="476"/>
    </location>
</feature>
<feature type="transmembrane region" description="Helical" evidence="2">
    <location>
        <begin position="490"/>
        <end position="510"/>
    </location>
</feature>
<feature type="transmembrane region" description="Helical" evidence="2">
    <location>
        <begin position="515"/>
        <end position="535"/>
    </location>
</feature>
<feature type="transmembrane region" description="Helical" evidence="2">
    <location>
        <begin position="545"/>
        <end position="565"/>
    </location>
</feature>
<feature type="transmembrane region" description="Helical" evidence="2">
    <location>
        <begin position="590"/>
        <end position="610"/>
    </location>
</feature>
<feature type="region of interest" description="Disordered" evidence="3">
    <location>
        <begin position="1"/>
        <end position="66"/>
    </location>
</feature>
<feature type="region of interest" description="Disordered" evidence="3">
    <location>
        <begin position="634"/>
        <end position="672"/>
    </location>
</feature>
<feature type="compositionally biased region" description="Low complexity" evidence="3">
    <location>
        <begin position="19"/>
        <end position="32"/>
    </location>
</feature>
<feature type="compositionally biased region" description="Basic and acidic residues" evidence="3">
    <location>
        <begin position="38"/>
        <end position="59"/>
    </location>
</feature>
<feature type="compositionally biased region" description="Basic and acidic residues" evidence="3">
    <location>
        <begin position="647"/>
        <end position="672"/>
    </location>
</feature>
<feature type="glycosylation site" description="N-linked (GlcNAc...) asparagine" evidence="2">
    <location>
        <position position="20"/>
    </location>
</feature>
<feature type="glycosylation site" description="N-linked (GlcNAc...) asparagine" evidence="2">
    <location>
        <position position="288"/>
    </location>
</feature>
<keyword id="KW-0029">Amino-acid transport</keyword>
<keyword id="KW-0072">Autophagy</keyword>
<keyword id="KW-0325">Glycoprotein</keyword>
<keyword id="KW-0472">Membrane</keyword>
<keyword id="KW-1185">Reference proteome</keyword>
<keyword id="KW-0812">Transmembrane</keyword>
<keyword id="KW-1133">Transmembrane helix</keyword>
<keyword id="KW-0813">Transport</keyword>
<keyword id="KW-0926">Vacuole</keyword>
<dbReference type="EMBL" id="CP009811">
    <property type="protein sequence ID" value="ATZ51913.1"/>
    <property type="molecule type" value="Genomic_DNA"/>
</dbReference>
<dbReference type="EMBL" id="CP009811">
    <property type="protein sequence ID" value="ATZ51914.1"/>
    <property type="molecule type" value="Genomic_DNA"/>
</dbReference>
<dbReference type="GlyCosmos" id="A6S3R7">
    <property type="glycosylation" value="2 sites, No reported glycans"/>
</dbReference>
<dbReference type="EnsemblFungi" id="Bcin07g04640.1">
    <property type="protein sequence ID" value="Bcin07p04640.1"/>
    <property type="gene ID" value="Bcin07g04640"/>
</dbReference>
<dbReference type="EnsemblFungi" id="Bcin07g04640.2">
    <property type="protein sequence ID" value="Bcin07p04640.2"/>
    <property type="gene ID" value="Bcin07g04640"/>
</dbReference>
<dbReference type="VEuPathDB" id="FungiDB:Bcin07g04640"/>
<dbReference type="OrthoDB" id="192733at2759"/>
<dbReference type="Proteomes" id="UP000001798">
    <property type="component" value="Chromosome bcin07"/>
</dbReference>
<dbReference type="GO" id="GO:0005774">
    <property type="term" value="C:vacuolar membrane"/>
    <property type="evidence" value="ECO:0007669"/>
    <property type="project" value="UniProtKB-SubCell"/>
</dbReference>
<dbReference type="GO" id="GO:0032974">
    <property type="term" value="P:amino acid transmembrane export from vacuole"/>
    <property type="evidence" value="ECO:0007669"/>
    <property type="project" value="InterPro"/>
</dbReference>
<dbReference type="GO" id="GO:0006914">
    <property type="term" value="P:autophagy"/>
    <property type="evidence" value="ECO:0007669"/>
    <property type="project" value="UniProtKB-KW"/>
</dbReference>
<dbReference type="CDD" id="cd17483">
    <property type="entry name" value="MFS_Atg22_like"/>
    <property type="match status" value="1"/>
</dbReference>
<dbReference type="FunFam" id="1.20.1250.20:FF:000645">
    <property type="entry name" value="Autophagy-related protein"/>
    <property type="match status" value="1"/>
</dbReference>
<dbReference type="Gene3D" id="1.20.1250.20">
    <property type="entry name" value="MFS general substrate transporter like domains"/>
    <property type="match status" value="1"/>
</dbReference>
<dbReference type="InterPro" id="IPR044738">
    <property type="entry name" value="Atg22"/>
</dbReference>
<dbReference type="InterPro" id="IPR024671">
    <property type="entry name" value="Atg22-like"/>
</dbReference>
<dbReference type="InterPro" id="IPR050495">
    <property type="entry name" value="ATG22/LtaA_families"/>
</dbReference>
<dbReference type="InterPro" id="IPR036259">
    <property type="entry name" value="MFS_trans_sf"/>
</dbReference>
<dbReference type="PANTHER" id="PTHR23519">
    <property type="entry name" value="AUTOPHAGY-RELATED PROTEIN 22"/>
    <property type="match status" value="1"/>
</dbReference>
<dbReference type="PANTHER" id="PTHR23519:SF1">
    <property type="entry name" value="AUTOPHAGY-RELATED PROTEIN 22"/>
    <property type="match status" value="1"/>
</dbReference>
<dbReference type="Pfam" id="PF11700">
    <property type="entry name" value="ATG22"/>
    <property type="match status" value="1"/>
</dbReference>
<dbReference type="SUPFAM" id="SSF103473">
    <property type="entry name" value="MFS general substrate transporter"/>
    <property type="match status" value="1"/>
</dbReference>
<protein>
    <recommendedName>
        <fullName>Autophagy-related protein 22</fullName>
    </recommendedName>
</protein>